<evidence type="ECO:0000250" key="1"/>
<evidence type="ECO:0000269" key="2">
    <source>
    </source>
</evidence>
<evidence type="ECO:0000305" key="3"/>
<feature type="chain" id="PRO_0000116493" description="Probable 20S rRNA accumulation protein 4">
    <location>
        <begin position="1"/>
        <end position="396"/>
    </location>
</feature>
<dbReference type="EMBL" id="CU329671">
    <property type="protein sequence ID" value="CAB08774.1"/>
    <property type="molecule type" value="Genomic_DNA"/>
</dbReference>
<dbReference type="PIR" id="T40010">
    <property type="entry name" value="T40010"/>
</dbReference>
<dbReference type="BioGRID" id="277145">
    <property type="interactions" value="46"/>
</dbReference>
<dbReference type="FunCoup" id="P87156">
    <property type="interactions" value="479"/>
</dbReference>
<dbReference type="STRING" id="284812.P87156"/>
<dbReference type="iPTMnet" id="P87156"/>
<dbReference type="PaxDb" id="4896-SPBC25H2.15.1"/>
<dbReference type="EnsemblFungi" id="SPBC25H2.15.1">
    <property type="protein sequence ID" value="SPBC25H2.15.1:pep"/>
    <property type="gene ID" value="SPBC25H2.15"/>
</dbReference>
<dbReference type="KEGG" id="spo:2540619"/>
<dbReference type="PomBase" id="SPBC25H2.15"/>
<dbReference type="VEuPathDB" id="FungiDB:SPBC25H2.15"/>
<dbReference type="eggNOG" id="KOG2061">
    <property type="taxonomic scope" value="Eukaryota"/>
</dbReference>
<dbReference type="HOGENOM" id="CLU_031771_1_1_1"/>
<dbReference type="InParanoid" id="P87156"/>
<dbReference type="OMA" id="MPGPWAD"/>
<dbReference type="PhylomeDB" id="P87156"/>
<dbReference type="PRO" id="PR:P87156"/>
<dbReference type="Proteomes" id="UP000002485">
    <property type="component" value="Chromosome II"/>
</dbReference>
<dbReference type="GO" id="GO:0005737">
    <property type="term" value="C:cytoplasm"/>
    <property type="evidence" value="ECO:0007005"/>
    <property type="project" value="PomBase"/>
</dbReference>
<dbReference type="GO" id="GO:0005829">
    <property type="term" value="C:cytosol"/>
    <property type="evidence" value="ECO:0007005"/>
    <property type="project" value="PomBase"/>
</dbReference>
<dbReference type="GO" id="GO:0005730">
    <property type="term" value="C:nucleolus"/>
    <property type="evidence" value="ECO:0007005"/>
    <property type="project" value="PomBase"/>
</dbReference>
<dbReference type="GO" id="GO:0005634">
    <property type="term" value="C:nucleus"/>
    <property type="evidence" value="ECO:0007005"/>
    <property type="project" value="PomBase"/>
</dbReference>
<dbReference type="GO" id="GO:0030490">
    <property type="term" value="P:maturation of SSU-rRNA"/>
    <property type="evidence" value="ECO:0000318"/>
    <property type="project" value="GO_Central"/>
</dbReference>
<dbReference type="InterPro" id="IPR007320">
    <property type="entry name" value="PDCD2_C"/>
</dbReference>
<dbReference type="PANTHER" id="PTHR47524">
    <property type="entry name" value="20S RRNA ACCUMULATION PROTEIN 4"/>
    <property type="match status" value="1"/>
</dbReference>
<dbReference type="PANTHER" id="PTHR47524:SF1">
    <property type="entry name" value="20S RRNA ACCUMULATION PROTEIN 4"/>
    <property type="match status" value="1"/>
</dbReference>
<dbReference type="Pfam" id="PF04194">
    <property type="entry name" value="PDCD2_C"/>
    <property type="match status" value="1"/>
</dbReference>
<protein>
    <recommendedName>
        <fullName>Probable 20S rRNA accumulation protein 4</fullName>
    </recommendedName>
</protein>
<comment type="function">
    <text evidence="1">Required for processing of the 20S pre-rRNA at site D to generate mature 18S rRNA.</text>
</comment>
<comment type="subcellular location">
    <subcellularLocation>
        <location evidence="2">Cytoplasm</location>
    </subcellularLocation>
    <subcellularLocation>
        <location evidence="2">Nucleus</location>
        <location evidence="2">Nucleolus</location>
    </subcellularLocation>
</comment>
<comment type="similarity">
    <text evidence="3">Belongs to the TSR4 family.</text>
</comment>
<sequence length="396" mass="44276">MSQKWVQTQAWLGFPDVPISQEDKPDEYSTFLGGFPVFFDGCSLNPNIIKCGNCKNLCRLLLQCYAPLEGDNLKERALYVWGCHNPSCRRVPNSIVCVRGVRLPLKSDIEAVKSPKAISHLEEKKSSPKEKKVNPFAITSESSRGLNPFSDATSANNPFSLSTDVNPSKPSSNVFSKPSFAAKAQQSITDQQKTQAKTKTKHIALTTSGMSVHPPVTETYTYPVTEAFQGMFLGLDLEYVPQNKVNSKKDDFSTFKNYTPYLNDSSEAWEKESYEKSPSVYEKTFRLFSEKISHNPTQCLRYERGGTPLLASGRDKLGQQLKSVTNFGKSPVPLCPLCKSPRLFEMQLMPHAISILNDEIAEWSTILVATCSMDCNPPINKDRVGYAVEWVGIQWD</sequence>
<keyword id="KW-0963">Cytoplasm</keyword>
<keyword id="KW-0539">Nucleus</keyword>
<keyword id="KW-1185">Reference proteome</keyword>
<keyword id="KW-0698">rRNA processing</keyword>
<proteinExistence type="inferred from homology"/>
<gene>
    <name type="ORF">SPBC25H2.15</name>
</gene>
<name>TSR4_SCHPO</name>
<reference key="1">
    <citation type="journal article" date="2002" name="Nature">
        <title>The genome sequence of Schizosaccharomyces pombe.</title>
        <authorList>
            <person name="Wood V."/>
            <person name="Gwilliam R."/>
            <person name="Rajandream M.A."/>
            <person name="Lyne M.H."/>
            <person name="Lyne R."/>
            <person name="Stewart A."/>
            <person name="Sgouros J.G."/>
            <person name="Peat N."/>
            <person name="Hayles J."/>
            <person name="Baker S.G."/>
            <person name="Basham D."/>
            <person name="Bowman S."/>
            <person name="Brooks K."/>
            <person name="Brown D."/>
            <person name="Brown S."/>
            <person name="Chillingworth T."/>
            <person name="Churcher C.M."/>
            <person name="Collins M."/>
            <person name="Connor R."/>
            <person name="Cronin A."/>
            <person name="Davis P."/>
            <person name="Feltwell T."/>
            <person name="Fraser A."/>
            <person name="Gentles S."/>
            <person name="Goble A."/>
            <person name="Hamlin N."/>
            <person name="Harris D.E."/>
            <person name="Hidalgo J."/>
            <person name="Hodgson G."/>
            <person name="Holroyd S."/>
            <person name="Hornsby T."/>
            <person name="Howarth S."/>
            <person name="Huckle E.J."/>
            <person name="Hunt S."/>
            <person name="Jagels K."/>
            <person name="James K.D."/>
            <person name="Jones L."/>
            <person name="Jones M."/>
            <person name="Leather S."/>
            <person name="McDonald S."/>
            <person name="McLean J."/>
            <person name="Mooney P."/>
            <person name="Moule S."/>
            <person name="Mungall K.L."/>
            <person name="Murphy L.D."/>
            <person name="Niblett D."/>
            <person name="Odell C."/>
            <person name="Oliver K."/>
            <person name="O'Neil S."/>
            <person name="Pearson D."/>
            <person name="Quail M.A."/>
            <person name="Rabbinowitsch E."/>
            <person name="Rutherford K.M."/>
            <person name="Rutter S."/>
            <person name="Saunders D."/>
            <person name="Seeger K."/>
            <person name="Sharp S."/>
            <person name="Skelton J."/>
            <person name="Simmonds M.N."/>
            <person name="Squares R."/>
            <person name="Squares S."/>
            <person name="Stevens K."/>
            <person name="Taylor K."/>
            <person name="Taylor R.G."/>
            <person name="Tivey A."/>
            <person name="Walsh S.V."/>
            <person name="Warren T."/>
            <person name="Whitehead S."/>
            <person name="Woodward J.R."/>
            <person name="Volckaert G."/>
            <person name="Aert R."/>
            <person name="Robben J."/>
            <person name="Grymonprez B."/>
            <person name="Weltjens I."/>
            <person name="Vanstreels E."/>
            <person name="Rieger M."/>
            <person name="Schaefer M."/>
            <person name="Mueller-Auer S."/>
            <person name="Gabel C."/>
            <person name="Fuchs M."/>
            <person name="Duesterhoeft A."/>
            <person name="Fritzc C."/>
            <person name="Holzer E."/>
            <person name="Moestl D."/>
            <person name="Hilbert H."/>
            <person name="Borzym K."/>
            <person name="Langer I."/>
            <person name="Beck A."/>
            <person name="Lehrach H."/>
            <person name="Reinhardt R."/>
            <person name="Pohl T.M."/>
            <person name="Eger P."/>
            <person name="Zimmermann W."/>
            <person name="Wedler H."/>
            <person name="Wambutt R."/>
            <person name="Purnelle B."/>
            <person name="Goffeau A."/>
            <person name="Cadieu E."/>
            <person name="Dreano S."/>
            <person name="Gloux S."/>
            <person name="Lelaure V."/>
            <person name="Mottier S."/>
            <person name="Galibert F."/>
            <person name="Aves S.J."/>
            <person name="Xiang Z."/>
            <person name="Hunt C."/>
            <person name="Moore K."/>
            <person name="Hurst S.M."/>
            <person name="Lucas M."/>
            <person name="Rochet M."/>
            <person name="Gaillardin C."/>
            <person name="Tallada V.A."/>
            <person name="Garzon A."/>
            <person name="Thode G."/>
            <person name="Daga R.R."/>
            <person name="Cruzado L."/>
            <person name="Jimenez J."/>
            <person name="Sanchez M."/>
            <person name="del Rey F."/>
            <person name="Benito J."/>
            <person name="Dominguez A."/>
            <person name="Revuelta J.L."/>
            <person name="Moreno S."/>
            <person name="Armstrong J."/>
            <person name="Forsburg S.L."/>
            <person name="Cerutti L."/>
            <person name="Lowe T."/>
            <person name="McCombie W.R."/>
            <person name="Paulsen I."/>
            <person name="Potashkin J."/>
            <person name="Shpakovski G.V."/>
            <person name="Ussery D."/>
            <person name="Barrell B.G."/>
            <person name="Nurse P."/>
        </authorList>
    </citation>
    <scope>NUCLEOTIDE SEQUENCE [LARGE SCALE GENOMIC DNA]</scope>
    <source>
        <strain>972 / ATCC 24843</strain>
    </source>
</reference>
<reference key="2">
    <citation type="journal article" date="2006" name="Nat. Biotechnol.">
        <title>ORFeome cloning and global analysis of protein localization in the fission yeast Schizosaccharomyces pombe.</title>
        <authorList>
            <person name="Matsuyama A."/>
            <person name="Arai R."/>
            <person name="Yashiroda Y."/>
            <person name="Shirai A."/>
            <person name="Kamata A."/>
            <person name="Sekido S."/>
            <person name="Kobayashi Y."/>
            <person name="Hashimoto A."/>
            <person name="Hamamoto M."/>
            <person name="Hiraoka Y."/>
            <person name="Horinouchi S."/>
            <person name="Yoshida M."/>
        </authorList>
    </citation>
    <scope>SUBCELLULAR LOCATION [LARGE SCALE ANALYSIS]</scope>
</reference>
<accession>P87156</accession>
<organism>
    <name type="scientific">Schizosaccharomyces pombe (strain 972 / ATCC 24843)</name>
    <name type="common">Fission yeast</name>
    <dbReference type="NCBI Taxonomy" id="284812"/>
    <lineage>
        <taxon>Eukaryota</taxon>
        <taxon>Fungi</taxon>
        <taxon>Dikarya</taxon>
        <taxon>Ascomycota</taxon>
        <taxon>Taphrinomycotina</taxon>
        <taxon>Schizosaccharomycetes</taxon>
        <taxon>Schizosaccharomycetales</taxon>
        <taxon>Schizosaccharomycetaceae</taxon>
        <taxon>Schizosaccharomyces</taxon>
    </lineage>
</organism>